<organism evidence="8">
    <name type="scientific">Caenorhabditis elegans</name>
    <dbReference type="NCBI Taxonomy" id="6239"/>
    <lineage>
        <taxon>Eukaryota</taxon>
        <taxon>Metazoa</taxon>
        <taxon>Ecdysozoa</taxon>
        <taxon>Nematoda</taxon>
        <taxon>Chromadorea</taxon>
        <taxon>Rhabditida</taxon>
        <taxon>Rhabditina</taxon>
        <taxon>Rhabditomorpha</taxon>
        <taxon>Rhabditoidea</taxon>
        <taxon>Rhabditidae</taxon>
        <taxon>Peloderinae</taxon>
        <taxon>Caenorhabditis</taxon>
    </lineage>
</organism>
<evidence type="ECO:0000255" key="1"/>
<evidence type="ECO:0000256" key="2">
    <source>
        <dbReference type="SAM" id="MobiDB-lite"/>
    </source>
</evidence>
<evidence type="ECO:0000269" key="3">
    <source>
    </source>
</evidence>
<evidence type="ECO:0000269" key="4">
    <source>
    </source>
</evidence>
<evidence type="ECO:0000303" key="5">
    <source>
    </source>
</evidence>
<evidence type="ECO:0000305" key="6"/>
<evidence type="ECO:0000305" key="7">
    <source>
    </source>
</evidence>
<evidence type="ECO:0000312" key="8">
    <source>
        <dbReference type="Proteomes" id="UP000001940"/>
    </source>
</evidence>
<evidence type="ECO:0000312" key="9">
    <source>
        <dbReference type="WormBase" id="F54C9.4"/>
    </source>
</evidence>
<dbReference type="EMBL" id="BX284602">
    <property type="protein sequence ID" value="CAA90250.1"/>
    <property type="molecule type" value="Genomic_DNA"/>
</dbReference>
<dbReference type="PIR" id="T22637">
    <property type="entry name" value="T22637"/>
</dbReference>
<dbReference type="RefSeq" id="NP_495810.1">
    <property type="nucleotide sequence ID" value="NM_063409.7"/>
</dbReference>
<dbReference type="SMR" id="Q20754"/>
<dbReference type="FunCoup" id="Q20754">
    <property type="interactions" value="1565"/>
</dbReference>
<dbReference type="STRING" id="6239.F54C9.4.1"/>
<dbReference type="PaxDb" id="6239-F54C9.4"/>
<dbReference type="PeptideAtlas" id="Q20754"/>
<dbReference type="EnsemblMetazoa" id="F54C9.4.1">
    <property type="protein sequence ID" value="F54C9.4.1"/>
    <property type="gene ID" value="WBGene00000615"/>
</dbReference>
<dbReference type="GeneID" id="174370"/>
<dbReference type="KEGG" id="cel:CELE_F54C9.4"/>
<dbReference type="UCSC" id="F54C9.4">
    <property type="organism name" value="c. elegans"/>
</dbReference>
<dbReference type="AGR" id="WB:WBGene00000615"/>
<dbReference type="CTD" id="174370"/>
<dbReference type="WormBase" id="F54C9.4">
    <property type="protein sequence ID" value="CE20864"/>
    <property type="gene ID" value="WBGene00000615"/>
    <property type="gene designation" value="col-38"/>
</dbReference>
<dbReference type="eggNOG" id="KOG3544">
    <property type="taxonomic scope" value="Eukaryota"/>
</dbReference>
<dbReference type="GeneTree" id="ENSGT00970000196078"/>
<dbReference type="HOGENOM" id="CLU_001074_4_3_1"/>
<dbReference type="InParanoid" id="Q20754"/>
<dbReference type="OMA" id="CPARAKK"/>
<dbReference type="OrthoDB" id="5983381at2759"/>
<dbReference type="PhylomeDB" id="Q20754"/>
<dbReference type="PRO" id="PR:Q20754"/>
<dbReference type="Proteomes" id="UP000001940">
    <property type="component" value="Chromosome II"/>
</dbReference>
<dbReference type="Bgee" id="WBGene00000615">
    <property type="expression patterns" value="Expressed in material anatomical entity and 5 other cell types or tissues"/>
</dbReference>
<dbReference type="GO" id="GO:0005634">
    <property type="term" value="C:nucleus"/>
    <property type="evidence" value="ECO:0007669"/>
    <property type="project" value="UniProtKB-SubCell"/>
</dbReference>
<dbReference type="GO" id="GO:0042302">
    <property type="term" value="F:structural constituent of cuticle"/>
    <property type="evidence" value="ECO:0007669"/>
    <property type="project" value="InterPro"/>
</dbReference>
<dbReference type="GO" id="GO:0040002">
    <property type="term" value="P:collagen and cuticulin-based cuticle development"/>
    <property type="evidence" value="ECO:0000315"/>
    <property type="project" value="UniProtKB"/>
</dbReference>
<dbReference type="Gene3D" id="1.20.5.320">
    <property type="entry name" value="6-Phosphogluconate Dehydrogenase, domain 3"/>
    <property type="match status" value="1"/>
</dbReference>
<dbReference type="InterPro" id="IPR002486">
    <property type="entry name" value="Col_cuticle_N"/>
</dbReference>
<dbReference type="InterPro" id="IPR008160">
    <property type="entry name" value="Collagen"/>
</dbReference>
<dbReference type="PANTHER" id="PTHR24637">
    <property type="entry name" value="COLLAGEN"/>
    <property type="match status" value="1"/>
</dbReference>
<dbReference type="PANTHER" id="PTHR24637:SF358">
    <property type="entry name" value="CUTICLE COLLAGEN 38"/>
    <property type="match status" value="1"/>
</dbReference>
<dbReference type="Pfam" id="PF01484">
    <property type="entry name" value="Col_cuticle_N"/>
    <property type="match status" value="1"/>
</dbReference>
<dbReference type="Pfam" id="PF01391">
    <property type="entry name" value="Collagen"/>
    <property type="match status" value="1"/>
</dbReference>
<dbReference type="SMART" id="SM01088">
    <property type="entry name" value="Col_cuticle_N"/>
    <property type="match status" value="1"/>
</dbReference>
<proteinExistence type="evidence at transcript level"/>
<protein>
    <recommendedName>
        <fullName evidence="5">Cuticle collagen 38</fullName>
    </recommendedName>
</protein>
<sequence length="287" mass="28423">MSKYLVPVCASISLVAVFGALVAMHSIVVDIDTMREEIVTGVHDMKVMSDDAWNRMIGFTKPSLDSESRSAAFASVFRNKRSAYPSQCNCDANSQGCPPGPPGPPGLPGGRGDQGPSGDKGRDGASGVSLAVTHHLPGGCIQCPQGPPGETGPDGDIGEPGFPGASGSAGQCGEDGAPGEAGITGEQGPQGEPGTEGSEGPTGQDGTIGGPGLPGQPGTPGWPGSQGEPGKNGDSGVDGEQGPQGPQGPDGQPGRDADNGQPGLPGKDGSIGPDANYCPCPARAKKH</sequence>
<keyword id="KW-1015">Disulfide bond</keyword>
<keyword id="KW-0539">Nucleus</keyword>
<keyword id="KW-1185">Reference proteome</keyword>
<keyword id="KW-0677">Repeat</keyword>
<keyword id="KW-0732">Signal</keyword>
<accession>Q20754</accession>
<comment type="function">
    <text evidence="3 7">Probable cuticular collagen-like protein (Probable). Nematode cuticles are composed largely of collagen-like proteins (Probable). The cuticle functions both as an exoskeleton and as a barrier to protect the worm from its environment (Probable). Acts downstream of the Wnt signaling pathway, perhaps in the formation of the adult cuticle (PubMed:24569038).</text>
</comment>
<comment type="subunit">
    <text evidence="7">Collagen polypeptide chains are complexed within the cuticle by disulfide bonds and other types of covalent cross-links.</text>
</comment>
<comment type="subcellular location">
    <subcellularLocation>
        <location evidence="3">Nucleus</location>
    </subcellularLocation>
</comment>
<comment type="developmental stage">
    <text evidence="3 4">Expressed in the hypodermal cells of the tail and head, the seam cells, and in the hyp7 syncytial hypodermis in the mid- to late-larval L4 stage, and young adult (PubMed:24569038, PubMed:29604168). Not expressed in the cells of the developing vulva (PubMed:24569038).</text>
</comment>
<comment type="disruption phenotype">
    <text evidence="3">RNAi-mediated knockdown causes hypodermal or cuticular rupture, typically in the anterior body region (PubMed:24569038). Abnormal gap between the outer layer of hypodermis and muscle and the internal organs, perhaps due to defects in cuticle integrity (PubMed:24569038).</text>
</comment>
<comment type="similarity">
    <text evidence="6">Belongs to the cuticular collagen family.</text>
</comment>
<name>COL38_CAEEL</name>
<reference evidence="8" key="1">
    <citation type="journal article" date="1998" name="Science">
        <title>Genome sequence of the nematode C. elegans: a platform for investigating biology.</title>
        <authorList>
            <consortium name="The C. elegans sequencing consortium"/>
        </authorList>
    </citation>
    <scope>NUCLEOTIDE SEQUENCE [LARGE SCALE GENOMIC DNA]</scope>
    <source>
        <strain evidence="8">Bristol N2</strain>
    </source>
</reference>
<reference evidence="6" key="2">
    <citation type="journal article" date="2014" name="G3 (Bethesda)">
        <title>Use of an activated beta-catenin to identify Wnt pathway target genes in caenorhabditis elegans, including a subset of collagen genes expressed in late larval development.</title>
        <authorList>
            <person name="Jackson B.M."/>
            <person name="Abete-Luzi P."/>
            <person name="Krause M.W."/>
            <person name="Eisenmann D.M."/>
        </authorList>
    </citation>
    <scope>FUNCTION</scope>
    <scope>SUBCELLULAR LOCATION</scope>
    <scope>DEVELOPMENTAL STAGE</scope>
    <scope>DISRUPTION PHENOTYPE</scope>
</reference>
<reference evidence="6" key="3">
    <citation type="journal article" date="2018" name="Genesis">
        <title>Regulation of C. elegans L4 cuticle collagen genes by the heterochronic protein LIN-29.</title>
        <authorList>
            <person name="Abete-Luzi P."/>
            <person name="Eisenmann D.M."/>
        </authorList>
    </citation>
    <scope>FUNCTION</scope>
    <scope>DEVELOPMENTAL STAGE</scope>
</reference>
<gene>
    <name evidence="9" type="primary">col-38</name>
    <name evidence="9" type="ORF">F54C9.4</name>
</gene>
<feature type="signal peptide" evidence="1">
    <location>
        <begin position="1"/>
        <end position="19"/>
    </location>
</feature>
<feature type="chain" id="PRO_0000455698" description="Cuticle collagen 38" evidence="1">
    <location>
        <begin position="20"/>
        <end position="287"/>
    </location>
</feature>
<feature type="domain" description="Collagen-like 1" evidence="1">
    <location>
        <begin position="145"/>
        <end position="200"/>
    </location>
</feature>
<feature type="domain" description="Collagen-like 2" evidence="1">
    <location>
        <begin position="215"/>
        <end position="273"/>
    </location>
</feature>
<feature type="region of interest" description="Disordered" evidence="2">
    <location>
        <begin position="95"/>
        <end position="287"/>
    </location>
</feature>
<feature type="compositionally biased region" description="Pro residues" evidence="2">
    <location>
        <begin position="98"/>
        <end position="107"/>
    </location>
</feature>
<feature type="compositionally biased region" description="Low complexity" evidence="2">
    <location>
        <begin position="184"/>
        <end position="205"/>
    </location>
</feature>
<feature type="compositionally biased region" description="Gly residues" evidence="2">
    <location>
        <begin position="206"/>
        <end position="215"/>
    </location>
</feature>
<feature type="compositionally biased region" description="Low complexity" evidence="2">
    <location>
        <begin position="238"/>
        <end position="252"/>
    </location>
</feature>